<organism>
    <name type="scientific">Macaca fascicularis</name>
    <name type="common">Crab-eating macaque</name>
    <name type="synonym">Cynomolgus monkey</name>
    <dbReference type="NCBI Taxonomy" id="9541"/>
    <lineage>
        <taxon>Eukaryota</taxon>
        <taxon>Metazoa</taxon>
        <taxon>Chordata</taxon>
        <taxon>Craniata</taxon>
        <taxon>Vertebrata</taxon>
        <taxon>Euteleostomi</taxon>
        <taxon>Mammalia</taxon>
        <taxon>Eutheria</taxon>
        <taxon>Euarchontoglires</taxon>
        <taxon>Primates</taxon>
        <taxon>Haplorrhini</taxon>
        <taxon>Catarrhini</taxon>
        <taxon>Cercopithecidae</taxon>
        <taxon>Cercopithecinae</taxon>
        <taxon>Macaca</taxon>
    </lineage>
</organism>
<feature type="chain" id="PRO_0000245533" description="RING finger protein 32">
    <location>
        <begin position="1"/>
        <end position="362"/>
    </location>
</feature>
<feature type="domain" description="IQ" evidence="2">
    <location>
        <begin position="186"/>
        <end position="215"/>
    </location>
</feature>
<feature type="zinc finger region" description="RING-type 1; atypical" evidence="3">
    <location>
        <begin position="127"/>
        <end position="169"/>
    </location>
</feature>
<feature type="zinc finger region" description="RING-type 2; atypical" evidence="3">
    <location>
        <begin position="293"/>
        <end position="352"/>
    </location>
</feature>
<feature type="sequence conflict" description="In Ref. 1; BAE01280." evidence="4" ref="1">
    <original>G</original>
    <variation>D</variation>
    <location>
        <position position="180"/>
    </location>
</feature>
<sequence>MLKNKGHSSKKDNLAVNAVALQDHILRDLQLRNLSVADHSKTQVQKKENKSLKRDTKAIIDTGLKKTMQCPKLEDSEKEYVLDPKPPPLTLAQKLGLIGPPPPQLSSDEWEKVKQRSLLQGDSVQPCPICKEEFELRPQVLLSCSHVFHRACLQAFEKFTNKKTCPLCRKNQYQTRVIHGGARLFRIKCVTRIQAYWRGYVVRKWYRNLRETVPPTDAKLRKKFFEKKFTEISHRILCSYNTNIEELFAEIDRCLAINRSVLQQFEEKYGHEITEEEWEKIQVQALRRETHECSICLAPLSPAGGQRVGAGQRSRETALLSCSHVFHHACLLALEEFSVGDRPPFHACPLCRSCYQKKILES</sequence>
<protein>
    <recommendedName>
        <fullName>RING finger protein 32</fullName>
    </recommendedName>
</protein>
<comment type="function">
    <text evidence="1">May play a role in sperm formation.</text>
</comment>
<comment type="subcellular location">
    <subcellularLocation>
        <location evidence="1">Cytoplasm</location>
    </subcellularLocation>
</comment>
<accession>Q4R5T4</accession>
<accession>Q4R6J5</accession>
<name>RNF32_MACFA</name>
<proteinExistence type="evidence at transcript level"/>
<evidence type="ECO:0000250" key="1"/>
<evidence type="ECO:0000255" key="2">
    <source>
        <dbReference type="PROSITE-ProRule" id="PRU00116"/>
    </source>
</evidence>
<evidence type="ECO:0000255" key="3">
    <source>
        <dbReference type="PROSITE-ProRule" id="PRU00175"/>
    </source>
</evidence>
<evidence type="ECO:0000305" key="4"/>
<dbReference type="EMBL" id="AB169188">
    <property type="protein sequence ID" value="BAE01280.1"/>
    <property type="molecule type" value="mRNA"/>
</dbReference>
<dbReference type="EMBL" id="AB169459">
    <property type="protein sequence ID" value="BAE01541.1"/>
    <property type="molecule type" value="mRNA"/>
</dbReference>
<dbReference type="RefSeq" id="NP_001272297.1">
    <property type="nucleotide sequence ID" value="NM_001285368.1"/>
</dbReference>
<dbReference type="STRING" id="9541.ENSMFAP00000032745"/>
<dbReference type="eggNOG" id="KOG0800">
    <property type="taxonomic scope" value="Eukaryota"/>
</dbReference>
<dbReference type="Proteomes" id="UP000233100">
    <property type="component" value="Unplaced"/>
</dbReference>
<dbReference type="GO" id="GO:0005737">
    <property type="term" value="C:cytoplasm"/>
    <property type="evidence" value="ECO:0007669"/>
    <property type="project" value="UniProtKB-SubCell"/>
</dbReference>
<dbReference type="GO" id="GO:0008270">
    <property type="term" value="F:zinc ion binding"/>
    <property type="evidence" value="ECO:0007669"/>
    <property type="project" value="UniProtKB-KW"/>
</dbReference>
<dbReference type="CDD" id="cd23767">
    <property type="entry name" value="IQCD"/>
    <property type="match status" value="1"/>
</dbReference>
<dbReference type="CDD" id="cd16677">
    <property type="entry name" value="RING-H2_RNF32_rpt1"/>
    <property type="match status" value="1"/>
</dbReference>
<dbReference type="CDD" id="cd16678">
    <property type="entry name" value="RING-H2_RNF32_rpt2"/>
    <property type="match status" value="1"/>
</dbReference>
<dbReference type="FunFam" id="3.30.40.10:FF:001048">
    <property type="entry name" value="Ring finger protein 32"/>
    <property type="match status" value="1"/>
</dbReference>
<dbReference type="FunFam" id="3.30.40.10:FF:000208">
    <property type="entry name" value="Zinc finger protein-related isoform 1"/>
    <property type="match status" value="1"/>
</dbReference>
<dbReference type="Gene3D" id="3.30.40.10">
    <property type="entry name" value="Zinc/RING finger domain, C3HC4 (zinc finger)"/>
    <property type="match status" value="2"/>
</dbReference>
<dbReference type="InterPro" id="IPR000048">
    <property type="entry name" value="IQ_motif_EF-hand-BS"/>
</dbReference>
<dbReference type="InterPro" id="IPR042862">
    <property type="entry name" value="RNF32"/>
</dbReference>
<dbReference type="InterPro" id="IPR027370">
    <property type="entry name" value="Znf-RING_euk"/>
</dbReference>
<dbReference type="InterPro" id="IPR001841">
    <property type="entry name" value="Znf_RING"/>
</dbReference>
<dbReference type="InterPro" id="IPR013083">
    <property type="entry name" value="Znf_RING/FYVE/PHD"/>
</dbReference>
<dbReference type="PANTHER" id="PTHR14991">
    <property type="entry name" value="RING FINGER PROTEIN 32"/>
    <property type="match status" value="1"/>
</dbReference>
<dbReference type="PANTHER" id="PTHR14991:SF0">
    <property type="entry name" value="RING FINGER PROTEIN 32"/>
    <property type="match status" value="1"/>
</dbReference>
<dbReference type="Pfam" id="PF00612">
    <property type="entry name" value="IQ"/>
    <property type="match status" value="1"/>
</dbReference>
<dbReference type="Pfam" id="PF13445">
    <property type="entry name" value="zf-RING_UBOX"/>
    <property type="match status" value="2"/>
</dbReference>
<dbReference type="SMART" id="SM00184">
    <property type="entry name" value="RING"/>
    <property type="match status" value="2"/>
</dbReference>
<dbReference type="SUPFAM" id="SSF57850">
    <property type="entry name" value="RING/U-box"/>
    <property type="match status" value="2"/>
</dbReference>
<dbReference type="PROSITE" id="PS50096">
    <property type="entry name" value="IQ"/>
    <property type="match status" value="1"/>
</dbReference>
<dbReference type="PROSITE" id="PS50089">
    <property type="entry name" value="ZF_RING_2"/>
    <property type="match status" value="2"/>
</dbReference>
<gene>
    <name type="primary">RNF32</name>
    <name type="ORF">QtsA-17885</name>
    <name type="ORF">QtsA-21017</name>
</gene>
<keyword id="KW-0963">Cytoplasm</keyword>
<keyword id="KW-0479">Metal-binding</keyword>
<keyword id="KW-1185">Reference proteome</keyword>
<keyword id="KW-0677">Repeat</keyword>
<keyword id="KW-0862">Zinc</keyword>
<keyword id="KW-0863">Zinc-finger</keyword>
<reference key="1">
    <citation type="submission" date="2005-06" db="EMBL/GenBank/DDBJ databases">
        <title>DNA sequences of macaque genes expressed in brain or testis and its evolutionary implications.</title>
        <authorList>
            <consortium name="International consortium for macaque cDNA sequencing and analysis"/>
        </authorList>
    </citation>
    <scope>NUCLEOTIDE SEQUENCE [LARGE SCALE MRNA]</scope>
    <source>
        <tissue>Testis</tissue>
    </source>
</reference>